<accession>P0C8X2</accession>
<comment type="function">
    <text evidence="1">Lysozymes have primarily a bacteriolytic function.</text>
</comment>
<comment type="catalytic activity">
    <reaction>
        <text>Hydrolysis of (1-&gt;4)-beta-linkages between N-acetylmuramic acid and N-acetyl-D-glucosamine residues in a peptidoglycan and between N-acetyl-D-glucosamine residues in chitodextrins.</text>
        <dbReference type="EC" id="3.2.1.17"/>
    </reaction>
</comment>
<comment type="subcellular location">
    <subcellularLocation>
        <location>Secreted</location>
    </subcellularLocation>
</comment>
<comment type="tissue specificity">
    <text>Expressed by the venom gland.</text>
</comment>
<comment type="mass spectrometry"/>
<comment type="similarity">
    <text evidence="2">Belongs to the glycosyl hydrolase 22 family.</text>
</comment>
<proteinExistence type="evidence at protein level"/>
<sequence>SIYERCELARELINR</sequence>
<name>LYSC_TITST</name>
<evidence type="ECO:0000250" key="1"/>
<evidence type="ECO:0000255" key="2">
    <source>
        <dbReference type="PROSITE-ProRule" id="PRU00680"/>
    </source>
</evidence>
<evidence type="ECO:0000269" key="3">
    <source>
    </source>
</evidence>
<organism>
    <name type="scientific">Tityus stigmurus</name>
    <name type="common">Brazilian scorpion</name>
    <dbReference type="NCBI Taxonomy" id="50344"/>
    <lineage>
        <taxon>Eukaryota</taxon>
        <taxon>Metazoa</taxon>
        <taxon>Ecdysozoa</taxon>
        <taxon>Arthropoda</taxon>
        <taxon>Chelicerata</taxon>
        <taxon>Arachnida</taxon>
        <taxon>Scorpiones</taxon>
        <taxon>Buthida</taxon>
        <taxon>Buthoidea</taxon>
        <taxon>Buthidae</taxon>
        <taxon>Tityus</taxon>
    </lineage>
</organism>
<protein>
    <recommendedName>
        <fullName>Lysozyme-like peptide</fullName>
        <ecNumber>3.2.1.17</ecNumber>
    </recommendedName>
</protein>
<reference key="1">
    <citation type="journal article" date="2007" name="Comp. Biochem. Physiol.">
        <title>Proteomic analysis of the venom from the scorpion Tityus stigmurus: biochemical and physiological comparison with other Tityus species.</title>
        <authorList>
            <person name="Batista C.V.F."/>
            <person name="Roman-Gonzalez S.A."/>
            <person name="Salas-Castillo S.P."/>
            <person name="Zamudio F.Z."/>
            <person name="Gomez-Lagunas F."/>
            <person name="Possani L.D."/>
        </authorList>
    </citation>
    <scope>PROTEIN SEQUENCE</scope>
    <scope>MASS SPECTROMETRY</scope>
    <source>
        <tissue>Venom</tissue>
    </source>
</reference>
<keyword id="KW-0044">Antibiotic</keyword>
<keyword id="KW-0929">Antimicrobial</keyword>
<keyword id="KW-0081">Bacteriolytic enzyme</keyword>
<keyword id="KW-0903">Direct protein sequencing</keyword>
<keyword id="KW-0326">Glycosidase</keyword>
<keyword id="KW-0378">Hydrolase</keyword>
<keyword id="KW-0964">Secreted</keyword>
<feature type="peptide" id="PRO_0000366110" description="Lysozyme-like peptide">
    <location>
        <begin position="1"/>
        <end position="15" status="greater than"/>
    </location>
</feature>
<feature type="non-terminal residue">
    <location>
        <position position="15"/>
    </location>
</feature>
<dbReference type="EC" id="3.2.1.17"/>
<dbReference type="GO" id="GO:0005576">
    <property type="term" value="C:extracellular region"/>
    <property type="evidence" value="ECO:0007669"/>
    <property type="project" value="UniProtKB-SubCell"/>
</dbReference>
<dbReference type="GO" id="GO:0003796">
    <property type="term" value="F:lysozyme activity"/>
    <property type="evidence" value="ECO:0007669"/>
    <property type="project" value="UniProtKB-EC"/>
</dbReference>
<dbReference type="GO" id="GO:0042742">
    <property type="term" value="P:defense response to bacterium"/>
    <property type="evidence" value="ECO:0007669"/>
    <property type="project" value="UniProtKB-KW"/>
</dbReference>
<dbReference type="GO" id="GO:0031640">
    <property type="term" value="P:killing of cells of another organism"/>
    <property type="evidence" value="ECO:0007669"/>
    <property type="project" value="UniProtKB-KW"/>
</dbReference>